<name>Y3860_XANCP</name>
<organism>
    <name type="scientific">Xanthomonas campestris pv. campestris (strain ATCC 33913 / DSM 3586 / NCPPB 528 / LMG 568 / P 25)</name>
    <dbReference type="NCBI Taxonomy" id="190485"/>
    <lineage>
        <taxon>Bacteria</taxon>
        <taxon>Pseudomonadati</taxon>
        <taxon>Pseudomonadota</taxon>
        <taxon>Gammaproteobacteria</taxon>
        <taxon>Lysobacterales</taxon>
        <taxon>Lysobacteraceae</taxon>
        <taxon>Xanthomonas</taxon>
    </lineage>
</organism>
<proteinExistence type="inferred from homology"/>
<sequence length="225" mass="24660">MHINDWPTDERPREKLLARGAAVLSDAELLAIFVGSGLRGQDAVRTARDLLHRHGPLRCLLDRPAKALARLPGLGPASACKLSAALELANRHLLSDLERGEALSDPSSVGRYFSQRLRARNYEVFAALFLDSRHRAIAFEELFTGTIDAAEIHPREVVRRALLHNAAAVVVGHNHPSGNPEPSEADRAVTQRLLQALGLVDIRLLDHFVIGDGRPVSLAERGWVP</sequence>
<accession>Q8P456</accession>
<feature type="chain" id="PRO_0000190755" description="UPF0758 protein XCC3860">
    <location>
        <begin position="1"/>
        <end position="225"/>
    </location>
</feature>
<feature type="domain" description="MPN" evidence="1">
    <location>
        <begin position="102"/>
        <end position="224"/>
    </location>
</feature>
<feature type="short sequence motif" description="JAMM motif" evidence="1">
    <location>
        <begin position="173"/>
        <end position="186"/>
    </location>
</feature>
<feature type="binding site" evidence="1">
    <location>
        <position position="173"/>
    </location>
    <ligand>
        <name>Zn(2+)</name>
        <dbReference type="ChEBI" id="CHEBI:29105"/>
        <note>catalytic</note>
    </ligand>
</feature>
<feature type="binding site" evidence="1">
    <location>
        <position position="175"/>
    </location>
    <ligand>
        <name>Zn(2+)</name>
        <dbReference type="ChEBI" id="CHEBI:29105"/>
        <note>catalytic</note>
    </ligand>
</feature>
<feature type="binding site" evidence="1">
    <location>
        <position position="186"/>
    </location>
    <ligand>
        <name>Zn(2+)</name>
        <dbReference type="ChEBI" id="CHEBI:29105"/>
        <note>catalytic</note>
    </ligand>
</feature>
<comment type="similarity">
    <text evidence="2">Belongs to the UPF0758 family.</text>
</comment>
<gene>
    <name type="ordered locus">XCC3860</name>
</gene>
<evidence type="ECO:0000255" key="1">
    <source>
        <dbReference type="PROSITE-ProRule" id="PRU01182"/>
    </source>
</evidence>
<evidence type="ECO:0000305" key="2"/>
<reference key="1">
    <citation type="journal article" date="2002" name="Nature">
        <title>Comparison of the genomes of two Xanthomonas pathogens with differing host specificities.</title>
        <authorList>
            <person name="da Silva A.C.R."/>
            <person name="Ferro J.A."/>
            <person name="Reinach F.C."/>
            <person name="Farah C.S."/>
            <person name="Furlan L.R."/>
            <person name="Quaggio R.B."/>
            <person name="Monteiro-Vitorello C.B."/>
            <person name="Van Sluys M.A."/>
            <person name="Almeida N.F. Jr."/>
            <person name="Alves L.M.C."/>
            <person name="do Amaral A.M."/>
            <person name="Bertolini M.C."/>
            <person name="Camargo L.E.A."/>
            <person name="Camarotte G."/>
            <person name="Cannavan F."/>
            <person name="Cardozo J."/>
            <person name="Chambergo F."/>
            <person name="Ciapina L.P."/>
            <person name="Cicarelli R.M.B."/>
            <person name="Coutinho L.L."/>
            <person name="Cursino-Santos J.R."/>
            <person name="El-Dorry H."/>
            <person name="Faria J.B."/>
            <person name="Ferreira A.J.S."/>
            <person name="Ferreira R.C.C."/>
            <person name="Ferro M.I.T."/>
            <person name="Formighieri E.F."/>
            <person name="Franco M.C."/>
            <person name="Greggio C.C."/>
            <person name="Gruber A."/>
            <person name="Katsuyama A.M."/>
            <person name="Kishi L.T."/>
            <person name="Leite R.P."/>
            <person name="Lemos E.G.M."/>
            <person name="Lemos M.V.F."/>
            <person name="Locali E.C."/>
            <person name="Machado M.A."/>
            <person name="Madeira A.M.B.N."/>
            <person name="Martinez-Rossi N.M."/>
            <person name="Martins E.C."/>
            <person name="Meidanis J."/>
            <person name="Menck C.F.M."/>
            <person name="Miyaki C.Y."/>
            <person name="Moon D.H."/>
            <person name="Moreira L.M."/>
            <person name="Novo M.T.M."/>
            <person name="Okura V.K."/>
            <person name="Oliveira M.C."/>
            <person name="Oliveira V.R."/>
            <person name="Pereira H.A."/>
            <person name="Rossi A."/>
            <person name="Sena J.A.D."/>
            <person name="Silva C."/>
            <person name="de Souza R.F."/>
            <person name="Spinola L.A.F."/>
            <person name="Takita M.A."/>
            <person name="Tamura R.E."/>
            <person name="Teixeira E.C."/>
            <person name="Tezza R.I.D."/>
            <person name="Trindade dos Santos M."/>
            <person name="Truffi D."/>
            <person name="Tsai S.M."/>
            <person name="White F.F."/>
            <person name="Setubal J.C."/>
            <person name="Kitajima J.P."/>
        </authorList>
    </citation>
    <scope>NUCLEOTIDE SEQUENCE [LARGE SCALE GENOMIC DNA]</scope>
    <source>
        <strain>ATCC 33913 / DSM 3586 / NCPPB 528 / LMG 568 / P 25</strain>
    </source>
</reference>
<protein>
    <recommendedName>
        <fullName>UPF0758 protein XCC3860</fullName>
    </recommendedName>
</protein>
<dbReference type="EMBL" id="AE008922">
    <property type="protein sequence ID" value="AAM43091.1"/>
    <property type="molecule type" value="Genomic_DNA"/>
</dbReference>
<dbReference type="RefSeq" id="NP_639200.1">
    <property type="nucleotide sequence ID" value="NC_003902.1"/>
</dbReference>
<dbReference type="SMR" id="Q8P456"/>
<dbReference type="STRING" id="190485.XCC3860"/>
<dbReference type="EnsemblBacteria" id="AAM43091">
    <property type="protein sequence ID" value="AAM43091"/>
    <property type="gene ID" value="XCC3860"/>
</dbReference>
<dbReference type="KEGG" id="xcc:XCC3860"/>
<dbReference type="PATRIC" id="fig|190485.4.peg.4129"/>
<dbReference type="eggNOG" id="COG2003">
    <property type="taxonomic scope" value="Bacteria"/>
</dbReference>
<dbReference type="HOGENOM" id="CLU_073529_0_0_6"/>
<dbReference type="OrthoDB" id="9804482at2"/>
<dbReference type="Proteomes" id="UP000001010">
    <property type="component" value="Chromosome"/>
</dbReference>
<dbReference type="GO" id="GO:0046872">
    <property type="term" value="F:metal ion binding"/>
    <property type="evidence" value="ECO:0007669"/>
    <property type="project" value="UniProtKB-KW"/>
</dbReference>
<dbReference type="GO" id="GO:0008237">
    <property type="term" value="F:metallopeptidase activity"/>
    <property type="evidence" value="ECO:0007669"/>
    <property type="project" value="UniProtKB-KW"/>
</dbReference>
<dbReference type="GO" id="GO:0006508">
    <property type="term" value="P:proteolysis"/>
    <property type="evidence" value="ECO:0007669"/>
    <property type="project" value="UniProtKB-KW"/>
</dbReference>
<dbReference type="CDD" id="cd08071">
    <property type="entry name" value="MPN_DUF2466"/>
    <property type="match status" value="1"/>
</dbReference>
<dbReference type="Gene3D" id="3.40.140.10">
    <property type="entry name" value="Cytidine Deaminase, domain 2"/>
    <property type="match status" value="1"/>
</dbReference>
<dbReference type="InterPro" id="IPR037518">
    <property type="entry name" value="MPN"/>
</dbReference>
<dbReference type="InterPro" id="IPR025657">
    <property type="entry name" value="RadC_JAB"/>
</dbReference>
<dbReference type="InterPro" id="IPR010994">
    <property type="entry name" value="RuvA_2-like"/>
</dbReference>
<dbReference type="InterPro" id="IPR001405">
    <property type="entry name" value="UPF0758"/>
</dbReference>
<dbReference type="InterPro" id="IPR020891">
    <property type="entry name" value="UPF0758_CS"/>
</dbReference>
<dbReference type="InterPro" id="IPR046778">
    <property type="entry name" value="UPF0758_N"/>
</dbReference>
<dbReference type="NCBIfam" id="NF000642">
    <property type="entry name" value="PRK00024.1"/>
    <property type="match status" value="1"/>
</dbReference>
<dbReference type="NCBIfam" id="TIGR00608">
    <property type="entry name" value="radc"/>
    <property type="match status" value="1"/>
</dbReference>
<dbReference type="PANTHER" id="PTHR30471">
    <property type="entry name" value="DNA REPAIR PROTEIN RADC"/>
    <property type="match status" value="1"/>
</dbReference>
<dbReference type="PANTHER" id="PTHR30471:SF3">
    <property type="entry name" value="UPF0758 PROTEIN YEES-RELATED"/>
    <property type="match status" value="1"/>
</dbReference>
<dbReference type="Pfam" id="PF04002">
    <property type="entry name" value="RadC"/>
    <property type="match status" value="1"/>
</dbReference>
<dbReference type="Pfam" id="PF20582">
    <property type="entry name" value="UPF0758_N"/>
    <property type="match status" value="1"/>
</dbReference>
<dbReference type="SUPFAM" id="SSF47781">
    <property type="entry name" value="RuvA domain 2-like"/>
    <property type="match status" value="1"/>
</dbReference>
<dbReference type="PROSITE" id="PS50249">
    <property type="entry name" value="MPN"/>
    <property type="match status" value="1"/>
</dbReference>
<dbReference type="PROSITE" id="PS01302">
    <property type="entry name" value="UPF0758"/>
    <property type="match status" value="1"/>
</dbReference>
<keyword id="KW-0378">Hydrolase</keyword>
<keyword id="KW-0479">Metal-binding</keyword>
<keyword id="KW-0482">Metalloprotease</keyword>
<keyword id="KW-0645">Protease</keyword>
<keyword id="KW-1185">Reference proteome</keyword>
<keyword id="KW-0862">Zinc</keyword>